<keyword id="KW-1185">Reference proteome</keyword>
<evidence type="ECO:0000305" key="1"/>
<gene>
    <name type="primary">OPG159</name>
    <name type="ORF">MPXVgp143</name>
</gene>
<name>PG159_MONPV</name>
<comment type="similarity">
    <text evidence="1">Belongs to the orthopoxvirus OPG159 protein family.</text>
</comment>
<organismHost>
    <name type="scientific">Cynomys gunnisoni</name>
    <name type="common">Gunnison's prairie dog</name>
    <name type="synonym">Spermophilus gunnisoni</name>
    <dbReference type="NCBI Taxonomy" id="45479"/>
</organismHost>
<organismHost>
    <name type="scientific">Cynomys leucurus</name>
    <name type="common">White-tailed prairie dog</name>
    <dbReference type="NCBI Taxonomy" id="99825"/>
</organismHost>
<organismHost>
    <name type="scientific">Cynomys ludovicianus</name>
    <name type="common">Black-tailed prairie dog</name>
    <dbReference type="NCBI Taxonomy" id="45480"/>
</organismHost>
<organismHost>
    <name type="scientific">Cynomys mexicanus</name>
    <name type="common">Mexican prairie dog</name>
    <dbReference type="NCBI Taxonomy" id="99826"/>
</organismHost>
<organismHost>
    <name type="scientific">Cynomys parvidens</name>
    <name type="common">Utah prairie dog</name>
    <dbReference type="NCBI Taxonomy" id="99827"/>
</organismHost>
<organismHost>
    <name type="scientific">Gliridae</name>
    <name type="common">dormice</name>
    <dbReference type="NCBI Taxonomy" id="30650"/>
</organismHost>
<organismHost>
    <name type="scientific">Heliosciurus ruwenzorii</name>
    <name type="common">Ruwenzori sun squirrel</name>
    <dbReference type="NCBI Taxonomy" id="226685"/>
</organismHost>
<organismHost>
    <name type="scientific">Homo sapiens</name>
    <name type="common">Human</name>
    <dbReference type="NCBI Taxonomy" id="9606"/>
</organismHost>
<organismHost>
    <name type="scientific">Mus musculus</name>
    <name type="common">Mouse</name>
    <dbReference type="NCBI Taxonomy" id="10090"/>
</organismHost>
<proteinExistence type="inferred from homology"/>
<accession>A0A7H0DND0</accession>
<protein>
    <recommendedName>
        <fullName>Protein OPG159</fullName>
    </recommendedName>
</protein>
<feature type="chain" id="PRO_0000457542" description="Protein OPG159">
    <location>
        <begin position="1"/>
        <end position="145"/>
    </location>
</feature>
<sequence length="145" mass="16927">MTSILNTLRFLEKTSFYNCNDSITKEKIKIKHKGMLFVFYKPKHSTVVKYLSGGGIYHDDLVVLGKVTINDLKMMLFYMDLSYHGVTSSGAIYKLGSSIDRLSLNRTIVTKVNNNYNNYNNYNNYNCYNNYNCYNYDDTFFDDDD</sequence>
<organism>
    <name type="scientific">Monkeypox virus</name>
    <dbReference type="NCBI Taxonomy" id="10244"/>
    <lineage>
        <taxon>Viruses</taxon>
        <taxon>Varidnaviria</taxon>
        <taxon>Bamfordvirae</taxon>
        <taxon>Nucleocytoviricota</taxon>
        <taxon>Pokkesviricetes</taxon>
        <taxon>Chitovirales</taxon>
        <taxon>Poxviridae</taxon>
        <taxon>Chordopoxvirinae</taxon>
        <taxon>Orthopoxvirus</taxon>
    </lineage>
</organism>
<dbReference type="EMBL" id="MT903340">
    <property type="protein sequence ID" value="QNP13013.1"/>
    <property type="molecule type" value="Genomic_DNA"/>
</dbReference>
<dbReference type="RefSeq" id="YP_010377140.1">
    <property type="nucleotide sequence ID" value="NC_063383.1"/>
</dbReference>
<dbReference type="GeneID" id="72551553"/>
<dbReference type="Proteomes" id="UP000516359">
    <property type="component" value="Genome"/>
</dbReference>
<dbReference type="InterPro" id="IPR008786">
    <property type="entry name" value="Poxvirus_A31"/>
</dbReference>
<dbReference type="Pfam" id="PF05771">
    <property type="entry name" value="Pox_A31"/>
    <property type="match status" value="1"/>
</dbReference>
<reference key="1">
    <citation type="journal article" date="2022" name="J. Infect. Dis.">
        <title>Exportation of Monkeypox virus from the African continent.</title>
        <authorList>
            <person name="Mauldin M.R."/>
            <person name="McCollum A.M."/>
            <person name="Nakazawa Y.J."/>
            <person name="Mandra A."/>
            <person name="Whitehouse E.R."/>
            <person name="Davidson W."/>
            <person name="Zhao H."/>
            <person name="Gao J."/>
            <person name="Li Y."/>
            <person name="Doty J."/>
            <person name="Yinka-Ogunleye A."/>
            <person name="Akinpelu A."/>
            <person name="Aruna O."/>
            <person name="Naidoo D."/>
            <person name="Lewandowski K."/>
            <person name="Afrough B."/>
            <person name="Graham V."/>
            <person name="Aarons E."/>
            <person name="Hewson R."/>
            <person name="Vipond R."/>
            <person name="Dunning J."/>
            <person name="Chand M."/>
            <person name="Brown C."/>
            <person name="Cohen-Gihon I."/>
            <person name="Erez N."/>
            <person name="Shifman O."/>
            <person name="Israeli O."/>
            <person name="Sharon M."/>
            <person name="Schwartz E."/>
            <person name="Beth-Din A."/>
            <person name="Zvi A."/>
            <person name="Mak T.M."/>
            <person name="Ng Y.K."/>
            <person name="Cui L."/>
            <person name="Lin R.T.P."/>
            <person name="Olson V.A."/>
            <person name="Brooks T."/>
            <person name="Paran N."/>
            <person name="Ihekweazu C."/>
            <person name="Reynolds M.G."/>
        </authorList>
    </citation>
    <scope>NUCLEOTIDE SEQUENCE [LARGE SCALE GENOMIC DNA]</scope>
    <source>
        <strain>MPXV-M5312_HM12_Rivers</strain>
    </source>
</reference>